<reference evidence="3" key="1">
    <citation type="journal article" date="2017" name="LWT Food Sci. Technol.">
        <title>Purification and characterization of Mejucin, a new bacteriocin produced by Bacillus subtilis SN7.</title>
        <authorList>
            <person name="Lee S.E."/>
            <person name="Chang H.C."/>
        </authorList>
    </citation>
    <scope>PROTEIN SEQUENCE</scope>
    <scope>FUNCTION</scope>
    <scope>BIOPHYSICOCHEMICAL PROPERTIES</scope>
    <scope>MASS SPECTROMETRY</scope>
    <scope>SUBCELLULAR LOCATION</scope>
    <source>
        <strain evidence="2">SN7</strain>
    </source>
</reference>
<organism>
    <name type="scientific">Bacillus subtilis</name>
    <dbReference type="NCBI Taxonomy" id="1423"/>
    <lineage>
        <taxon>Bacteria</taxon>
        <taxon>Bacillati</taxon>
        <taxon>Bacillota</taxon>
        <taxon>Bacilli</taxon>
        <taxon>Bacillales</taxon>
        <taxon>Bacillaceae</taxon>
        <taxon>Bacillus</taxon>
    </lineage>
</organism>
<evidence type="ECO:0000269" key="1">
    <source ref="1"/>
</evidence>
<evidence type="ECO:0000303" key="2">
    <source ref="1"/>
</evidence>
<evidence type="ECO:0000305" key="3"/>
<feature type="peptide" id="PRO_0000442141" description="Mejucin" evidence="1">
    <location>
        <begin position="1"/>
        <end position="30"/>
    </location>
</feature>
<accession>C0HL39</accession>
<name>MEJUC_BACIU</name>
<proteinExistence type="evidence at protein level"/>
<sequence>LGPQLNKGCATCSIGAACLVDGPIPDEIAG</sequence>
<comment type="function">
    <text evidence="1">Bacteriocin that inhibits the growth of several Gram-positive bacteria, especially the food-borne pathogens L.monocytogenes, B.cereus strain ATCC 11778, B.cereus strain ATCC 21366, B.cereus strain ATCC 10876 and B.cereus strain ATCC 14579. Likely to act by disrupting the pathogen membrane resulting in leakage of intracellular constituents. Does not inhibit the growth of Gram-negative bacteria.</text>
</comment>
<comment type="biophysicochemical properties">
    <phDependence>
        <text evidence="1">Active from pH 3.0 and pH 9.0.</text>
    </phDependence>
    <temperatureDependence>
        <text evidence="1">Thermostable, retains activity after heating at 50 degrees Celsius for 24 hours. Activity decreases over 70 degrees Celsius.</text>
    </temperatureDependence>
</comment>
<comment type="subcellular location">
    <subcellularLocation>
        <location evidence="1">Secreted</location>
    </subcellularLocation>
</comment>
<comment type="mass spectrometry"/>
<comment type="similarity">
    <text evidence="3">Belongs to the bacteriocin class V family.</text>
</comment>
<keyword id="KW-0044">Antibiotic</keyword>
<keyword id="KW-0929">Antimicrobial</keyword>
<keyword id="KW-0078">Bacteriocin</keyword>
<keyword id="KW-0903">Direct protein sequencing</keyword>
<keyword id="KW-0964">Secreted</keyword>
<dbReference type="STRING" id="483913.AN935_18910"/>
<dbReference type="GO" id="GO:0005576">
    <property type="term" value="C:extracellular region"/>
    <property type="evidence" value="ECO:0007669"/>
    <property type="project" value="UniProtKB-SubCell"/>
</dbReference>
<dbReference type="GO" id="GO:0042742">
    <property type="term" value="P:defense response to bacterium"/>
    <property type="evidence" value="ECO:0007669"/>
    <property type="project" value="UniProtKB-KW"/>
</dbReference>
<dbReference type="GO" id="GO:0031640">
    <property type="term" value="P:killing of cells of another organism"/>
    <property type="evidence" value="ECO:0007669"/>
    <property type="project" value="UniProtKB-KW"/>
</dbReference>
<dbReference type="InterPro" id="IPR021539">
    <property type="entry name" value="Subtilosin_A"/>
</dbReference>
<dbReference type="Pfam" id="PF11420">
    <property type="entry name" value="Subtilosin_A"/>
    <property type="match status" value="1"/>
</dbReference>
<protein>
    <recommendedName>
        <fullName evidence="2">Mejucin</fullName>
    </recommendedName>
</protein>